<sequence length="132" mass="14534">MARVTVEDCVERVPNRFELVLLAAQRARGLSRGEELTVDRDNDKNPVVALREIADQTIVLEQIRSDLVRSLARAPEPEPADEEVMDLIPTEQNIFGLQDVSAEEEASHGTAGMSAEELEAAIEAELGGRARR</sequence>
<protein>
    <recommendedName>
        <fullName evidence="1">DNA-directed RNA polymerase subunit omega</fullName>
        <shortName evidence="1">RNAP omega subunit</shortName>
        <ecNumber evidence="1">2.7.7.6</ecNumber>
    </recommendedName>
    <alternativeName>
        <fullName evidence="1">RNA polymerase omega subunit</fullName>
    </alternativeName>
    <alternativeName>
        <fullName evidence="1">Transcriptase subunit omega</fullName>
    </alternativeName>
</protein>
<name>RPOZ_GLUDA</name>
<dbReference type="EC" id="2.7.7.6" evidence="1"/>
<dbReference type="EMBL" id="AM889285">
    <property type="protein sequence ID" value="CAP56100.1"/>
    <property type="molecule type" value="Genomic_DNA"/>
</dbReference>
<dbReference type="EMBL" id="CP001189">
    <property type="protein sequence ID" value="ACI50173.1"/>
    <property type="molecule type" value="Genomic_DNA"/>
</dbReference>
<dbReference type="RefSeq" id="WP_012225967.1">
    <property type="nucleotide sequence ID" value="NC_010125.1"/>
</dbReference>
<dbReference type="SMR" id="A9HKY5"/>
<dbReference type="STRING" id="272568.GDI2157"/>
<dbReference type="KEGG" id="gdi:GDI2157"/>
<dbReference type="KEGG" id="gdj:Gdia_0377"/>
<dbReference type="eggNOG" id="COG1758">
    <property type="taxonomic scope" value="Bacteria"/>
</dbReference>
<dbReference type="HOGENOM" id="CLU_125406_2_0_5"/>
<dbReference type="OrthoDB" id="9796300at2"/>
<dbReference type="Proteomes" id="UP000001176">
    <property type="component" value="Chromosome"/>
</dbReference>
<dbReference type="GO" id="GO:0000428">
    <property type="term" value="C:DNA-directed RNA polymerase complex"/>
    <property type="evidence" value="ECO:0007669"/>
    <property type="project" value="UniProtKB-KW"/>
</dbReference>
<dbReference type="GO" id="GO:0003677">
    <property type="term" value="F:DNA binding"/>
    <property type="evidence" value="ECO:0007669"/>
    <property type="project" value="UniProtKB-UniRule"/>
</dbReference>
<dbReference type="GO" id="GO:0003899">
    <property type="term" value="F:DNA-directed RNA polymerase activity"/>
    <property type="evidence" value="ECO:0007669"/>
    <property type="project" value="UniProtKB-UniRule"/>
</dbReference>
<dbReference type="GO" id="GO:0006351">
    <property type="term" value="P:DNA-templated transcription"/>
    <property type="evidence" value="ECO:0007669"/>
    <property type="project" value="UniProtKB-UniRule"/>
</dbReference>
<dbReference type="Gene3D" id="3.90.940.10">
    <property type="match status" value="1"/>
</dbReference>
<dbReference type="HAMAP" id="MF_00366">
    <property type="entry name" value="RNApol_bact_RpoZ"/>
    <property type="match status" value="1"/>
</dbReference>
<dbReference type="InterPro" id="IPR003716">
    <property type="entry name" value="DNA-dir_RNA_pol_omega"/>
</dbReference>
<dbReference type="InterPro" id="IPR006110">
    <property type="entry name" value="Pol_omega/Rpo6/RPB6"/>
</dbReference>
<dbReference type="InterPro" id="IPR036161">
    <property type="entry name" value="RPB6/omega-like_sf"/>
</dbReference>
<dbReference type="NCBIfam" id="TIGR00690">
    <property type="entry name" value="rpoZ"/>
    <property type="match status" value="1"/>
</dbReference>
<dbReference type="PANTHER" id="PTHR34476">
    <property type="entry name" value="DNA-DIRECTED RNA POLYMERASE SUBUNIT OMEGA"/>
    <property type="match status" value="1"/>
</dbReference>
<dbReference type="PANTHER" id="PTHR34476:SF1">
    <property type="entry name" value="DNA-DIRECTED RNA POLYMERASE SUBUNIT OMEGA"/>
    <property type="match status" value="1"/>
</dbReference>
<dbReference type="Pfam" id="PF01192">
    <property type="entry name" value="RNA_pol_Rpb6"/>
    <property type="match status" value="1"/>
</dbReference>
<dbReference type="SMART" id="SM01409">
    <property type="entry name" value="RNA_pol_Rpb6"/>
    <property type="match status" value="1"/>
</dbReference>
<dbReference type="SUPFAM" id="SSF63562">
    <property type="entry name" value="RPB6/omega subunit-like"/>
    <property type="match status" value="1"/>
</dbReference>
<reference key="1">
    <citation type="journal article" date="2009" name="BMC Genomics">
        <title>Complete genome sequence of the sugarcane nitrogen-fixing endophyte Gluconacetobacter diazotrophicus Pal5.</title>
        <authorList>
            <person name="Bertalan M."/>
            <person name="Albano R."/>
            <person name="de Padua V."/>
            <person name="Rouws L."/>
            <person name="Rojas C."/>
            <person name="Hemerly A."/>
            <person name="Teixeira K."/>
            <person name="Schwab S."/>
            <person name="Araujo J."/>
            <person name="Oliveira A."/>
            <person name="Franca L."/>
            <person name="Magalhaes V."/>
            <person name="Alqueres S."/>
            <person name="Cardoso A."/>
            <person name="Almeida W."/>
            <person name="Loureiro M.M."/>
            <person name="Nogueira E."/>
            <person name="Cidade D."/>
            <person name="Oliveira D."/>
            <person name="Simao T."/>
            <person name="Macedo J."/>
            <person name="Valadao A."/>
            <person name="Dreschsel M."/>
            <person name="Freitas F."/>
            <person name="Vidal M."/>
            <person name="Guedes H."/>
            <person name="Rodrigues E."/>
            <person name="Meneses C."/>
            <person name="Brioso P."/>
            <person name="Pozzer L."/>
            <person name="Figueiredo D."/>
            <person name="Montano H."/>
            <person name="Junior J."/>
            <person name="de Souza Filho G."/>
            <person name="Martin Quintana Flores V."/>
            <person name="Ferreira B."/>
            <person name="Branco A."/>
            <person name="Gonzalez P."/>
            <person name="Guillobel H."/>
            <person name="Lemos M."/>
            <person name="Seibel L."/>
            <person name="Macedo J."/>
            <person name="Alves-Ferreira M."/>
            <person name="Sachetto-Martins G."/>
            <person name="Coelho A."/>
            <person name="Santos E."/>
            <person name="Amaral G."/>
            <person name="Neves A."/>
            <person name="Pacheco A.B."/>
            <person name="Carvalho D."/>
            <person name="Lery L."/>
            <person name="Bisch P."/>
            <person name="Rossle S.C."/>
            <person name="Urmenyi T."/>
            <person name="Rael Pereira A."/>
            <person name="Silva R."/>
            <person name="Rondinelli E."/>
            <person name="von Kruger W."/>
            <person name="Martins O."/>
            <person name="Baldani J.I."/>
            <person name="Ferreira P.C."/>
        </authorList>
    </citation>
    <scope>NUCLEOTIDE SEQUENCE [LARGE SCALE GENOMIC DNA]</scope>
    <source>
        <strain>ATCC 49037 / DSM 5601 / CCUG 37298 / CIP 103539 / LMG 7603 / PAl5</strain>
    </source>
</reference>
<reference key="2">
    <citation type="journal article" date="2010" name="Stand. Genomic Sci.">
        <title>Two genome sequences of the same bacterial strain, Gluconacetobacter diazotrophicus PAl 5, suggest a new standard in genome sequence submission.</title>
        <authorList>
            <person name="Giongo A."/>
            <person name="Tyler H.L."/>
            <person name="Zipperer U.N."/>
            <person name="Triplett E.W."/>
        </authorList>
    </citation>
    <scope>NUCLEOTIDE SEQUENCE [LARGE SCALE GENOMIC DNA]</scope>
    <source>
        <strain>ATCC 49037 / DSM 5601 / CCUG 37298 / CIP 103539 / LMG 7603 / PAl5</strain>
    </source>
</reference>
<evidence type="ECO:0000255" key="1">
    <source>
        <dbReference type="HAMAP-Rule" id="MF_00366"/>
    </source>
</evidence>
<evidence type="ECO:0000256" key="2">
    <source>
        <dbReference type="SAM" id="MobiDB-lite"/>
    </source>
</evidence>
<feature type="chain" id="PRO_1000079631" description="DNA-directed RNA polymerase subunit omega">
    <location>
        <begin position="1"/>
        <end position="132"/>
    </location>
</feature>
<feature type="region of interest" description="Disordered" evidence="2">
    <location>
        <begin position="100"/>
        <end position="119"/>
    </location>
</feature>
<keyword id="KW-0240">DNA-directed RNA polymerase</keyword>
<keyword id="KW-0548">Nucleotidyltransferase</keyword>
<keyword id="KW-1185">Reference proteome</keyword>
<keyword id="KW-0804">Transcription</keyword>
<keyword id="KW-0808">Transferase</keyword>
<comment type="function">
    <text evidence="1">Promotes RNA polymerase assembly. Latches the N- and C-terminal regions of the beta' subunit thereby facilitating its interaction with the beta and alpha subunits.</text>
</comment>
<comment type="catalytic activity">
    <reaction evidence="1">
        <text>RNA(n) + a ribonucleoside 5'-triphosphate = RNA(n+1) + diphosphate</text>
        <dbReference type="Rhea" id="RHEA:21248"/>
        <dbReference type="Rhea" id="RHEA-COMP:14527"/>
        <dbReference type="Rhea" id="RHEA-COMP:17342"/>
        <dbReference type="ChEBI" id="CHEBI:33019"/>
        <dbReference type="ChEBI" id="CHEBI:61557"/>
        <dbReference type="ChEBI" id="CHEBI:140395"/>
        <dbReference type="EC" id="2.7.7.6"/>
    </reaction>
</comment>
<comment type="subunit">
    <text evidence="1">The RNAP catalytic core consists of 2 alpha, 1 beta, 1 beta' and 1 omega subunit. When a sigma factor is associated with the core the holoenzyme is formed, which can initiate transcription.</text>
</comment>
<comment type="similarity">
    <text evidence="1">Belongs to the RNA polymerase subunit omega family.</text>
</comment>
<accession>A9HKY5</accession>
<accession>B5ZLP4</accession>
<gene>
    <name evidence="1" type="primary">rpoZ</name>
    <name type="ordered locus">GDI2157</name>
    <name type="ordered locus">Gdia_0377</name>
</gene>
<proteinExistence type="inferred from homology"/>
<organism>
    <name type="scientific">Gluconacetobacter diazotrophicus (strain ATCC 49037 / DSM 5601 / CCUG 37298 / CIP 103539 / LMG 7603 / PAl5)</name>
    <dbReference type="NCBI Taxonomy" id="272568"/>
    <lineage>
        <taxon>Bacteria</taxon>
        <taxon>Pseudomonadati</taxon>
        <taxon>Pseudomonadota</taxon>
        <taxon>Alphaproteobacteria</taxon>
        <taxon>Acetobacterales</taxon>
        <taxon>Acetobacteraceae</taxon>
        <taxon>Gluconacetobacter</taxon>
    </lineage>
</organism>